<keyword id="KW-0238">DNA-binding</keyword>
<keyword id="KW-0371">Homeobox</keyword>
<keyword id="KW-0539">Nucleus</keyword>
<gene>
    <name type="primary">MATA2</name>
</gene>
<accession>P0CY12</accession>
<accession>D6VR97</accession>
<accession>P01367</accession>
<accession>P01368</accession>
<accession>Q6B184</accession>
<organism>
    <name type="scientific">Saccharomyces cerevisiae</name>
    <name type="common">Baker's yeast</name>
    <dbReference type="NCBI Taxonomy" id="4932"/>
    <lineage>
        <taxon>Eukaryota</taxon>
        <taxon>Fungi</taxon>
        <taxon>Dikarya</taxon>
        <taxon>Ascomycota</taxon>
        <taxon>Saccharomycotina</taxon>
        <taxon>Saccharomycetes</taxon>
        <taxon>Saccharomycetales</taxon>
        <taxon>Saccharomycetaceae</taxon>
        <taxon>Saccharomyces</taxon>
    </lineage>
</organism>
<feature type="chain" id="PRO_0000049185" description="Putative mating-type protein A2">
    <location>
        <begin position="1"/>
        <end position="119"/>
    </location>
</feature>
<feature type="DNA-binding region" description="Homeobox; TALE-type" evidence="1">
    <location>
        <begin position="38"/>
        <end position="100"/>
    </location>
</feature>
<protein>
    <recommendedName>
        <fullName>Putative mating-type protein A2</fullName>
        <shortName>MATa2 protein</shortName>
    </recommendedName>
</protein>
<dbReference type="EMBL" id="V01313">
    <property type="protein sequence ID" value="CAA24620.1"/>
    <property type="molecule type" value="Genomic_DNA"/>
</dbReference>
<dbReference type="PIR" id="S19398">
    <property type="entry name" value="JFBYA2"/>
</dbReference>
<dbReference type="SMR" id="P0CY12"/>
<dbReference type="IntAct" id="P0CY12">
    <property type="interactions" value="1"/>
</dbReference>
<dbReference type="MINT" id="P0CY12"/>
<dbReference type="KEGG" id="sce:YCR096C"/>
<dbReference type="SGD" id="S000029661">
    <property type="gene designation" value="MATA2"/>
</dbReference>
<dbReference type="VEuPathDB" id="FungiDB:YCR096C"/>
<dbReference type="OrthoDB" id="4069986at2759"/>
<dbReference type="PhylomeDB" id="P0CY12"/>
<dbReference type="GO" id="GO:0005634">
    <property type="term" value="C:nucleus"/>
    <property type="evidence" value="ECO:0007669"/>
    <property type="project" value="UniProtKB-SubCell"/>
</dbReference>
<dbReference type="GO" id="GO:0003677">
    <property type="term" value="F:DNA binding"/>
    <property type="evidence" value="ECO:0007669"/>
    <property type="project" value="UniProtKB-KW"/>
</dbReference>
<dbReference type="CDD" id="cd00086">
    <property type="entry name" value="homeodomain"/>
    <property type="match status" value="1"/>
</dbReference>
<dbReference type="Gene3D" id="1.10.10.60">
    <property type="entry name" value="Homeodomain-like"/>
    <property type="match status" value="1"/>
</dbReference>
<dbReference type="InterPro" id="IPR001356">
    <property type="entry name" value="HD"/>
</dbReference>
<dbReference type="InterPro" id="IPR009057">
    <property type="entry name" value="Homeodomain-like_sf"/>
</dbReference>
<dbReference type="Pfam" id="PF00046">
    <property type="entry name" value="Homeodomain"/>
    <property type="match status" value="1"/>
</dbReference>
<dbReference type="SMART" id="SM00389">
    <property type="entry name" value="HOX"/>
    <property type="match status" value="1"/>
</dbReference>
<dbReference type="SUPFAM" id="SSF46689">
    <property type="entry name" value="Homeodomain-like"/>
    <property type="match status" value="1"/>
</dbReference>
<dbReference type="PROSITE" id="PS50071">
    <property type="entry name" value="HOMEOBOX_2"/>
    <property type="match status" value="1"/>
</dbReference>
<proteinExistence type="inferred from homology"/>
<evidence type="ECO:0000255" key="1">
    <source>
        <dbReference type="PROSITE-ProRule" id="PRU00108"/>
    </source>
</evidence>
<evidence type="ECO:0000269" key="2">
    <source>
    </source>
</evidence>
<evidence type="ECO:0000305" key="3"/>
<name>MATA2_YEASX</name>
<reference key="1">
    <citation type="journal article" date="1981" name="Cell">
        <title>The sequence of the DNAs coding for the mating-type loci of Saccharomyces cerevisiae.</title>
        <authorList>
            <person name="Astell C.R."/>
            <person name="Ahlstrom-Jonasson L."/>
            <person name="Smith M."/>
            <person name="Tatchell K."/>
            <person name="Nasmyth K.A."/>
            <person name="Hall B.D."/>
        </authorList>
    </citation>
    <scope>NUCLEOTIDE SEQUENCE [GENOMIC DNA]</scope>
</reference>
<reference key="2">
    <citation type="journal article" date="1981" name="Cold Spring Harb. Symp. Quant. Biol.">
        <title>Physical analysis of mating-type loci in Saccharomyces cerevisiae.</title>
        <authorList>
            <person name="Nasmyth K.A."/>
            <person name="Tatchell K."/>
            <person name="Hall B.D."/>
            <person name="Astell C."/>
            <person name="Smith M."/>
        </authorList>
    </citation>
    <scope>NUCLEOTIDE SEQUENCE [GENOMIC DNA]</scope>
</reference>
<reference key="3">
    <citation type="journal article" date="1989" name="Mol. Cell. Biol.">
        <title>Regulation of STA1 gene expression by MAT during the life cycle of Saccharomyces cerevisiae.</title>
        <authorList>
            <person name="Dranginis A.M."/>
        </authorList>
    </citation>
    <scope>FUNCTION</scope>
</reference>
<sequence>MRSIENDRSNYQLTQKNKSADGLVFNVVTQDMINKSTKPYRGHRFTKENVRILESWFAKNIENPYLDTKGLENLMKNTSLSRIQIKNWVSNRRRKEKTITIAPELADLLSGEPLAKKKE</sequence>
<comment type="function">
    <text evidence="2">Probably not a functional protein. Cells lacking A2 show no obvious alterations in mating, sporulation and cell growth.</text>
</comment>
<comment type="subcellular location">
    <subcellularLocation>
        <location evidence="1">Nucleus</location>
    </subcellularLocation>
</comment>
<comment type="miscellaneous">
    <text>S.cerevisiae mating-type protein A2 is identical to residues 92-210 of ALPHA2 and should not be confused with the mating-type protein A2 of other yeast species.</text>
</comment>
<comment type="miscellaneous">
    <text>There are three genetic loci for mating type genes in S.cerevisiae. MAT is the expression locus that determines the mating type of the cell, whereas HML (containing HMLALPHA1 and HMLALPHA2) and HMR (containing HMRA1 and HMRA2) represent silenced repositories of mating type information. The mating type is determined by the MAT locus, which contains either a copy of HML or of HMR. Diploid cells are usually heterozygous for the MAT locus.</text>
</comment>
<comment type="similarity">
    <text evidence="3">Belongs to the TALE/M-ATYP homeobox family.</text>
</comment>